<comment type="subcellular location">
    <subcellularLocation>
        <location evidence="1">Nucleus</location>
    </subcellularLocation>
</comment>
<comment type="tissue specificity">
    <text evidence="1">Highly expressed in prostate and testis. Also detected in placenta, muscle, colon, peripheral blood leukocytes and skin.</text>
</comment>
<protein>
    <recommendedName>
        <fullName evidence="3">Protein PRAC2</fullName>
    </recommendedName>
    <alternativeName>
        <fullName evidence="2">Prostate, rectum and colon expressed gene protein 2</fullName>
    </alternativeName>
</protein>
<name>PRAC2_HUMAN</name>
<gene>
    <name evidence="4" type="primary">PRAC2</name>
    <name evidence="4" type="synonym">C17orf93</name>
    <name evidence="4" type="synonym">HOXB-AS5</name>
    <name evidence="4" type="synonym">HOXB13-AS1</name>
    <name evidence="4" type="synonym">NCRNA00253</name>
</gene>
<keyword id="KW-0539">Nucleus</keyword>
<keyword id="KW-1185">Reference proteome</keyword>
<accession>D3DTV9</accession>
<feature type="chain" id="PRO_0000430950" description="Protein PRAC2">
    <location>
        <begin position="1"/>
        <end position="90"/>
    </location>
</feature>
<evidence type="ECO:0000269" key="1">
    <source>
    </source>
</evidence>
<evidence type="ECO:0000303" key="2">
    <source>
    </source>
</evidence>
<evidence type="ECO:0000305" key="3"/>
<evidence type="ECO:0000312" key="4">
    <source>
        <dbReference type="HGNC" id="HGNC:30143"/>
    </source>
</evidence>
<reference key="1">
    <citation type="journal article" date="2006" name="Nature">
        <title>DNA sequence of human chromosome 17 and analysis of rearrangement in the human lineage.</title>
        <authorList>
            <person name="Zody M.C."/>
            <person name="Garber M."/>
            <person name="Adams D.J."/>
            <person name="Sharpe T."/>
            <person name="Harrow J."/>
            <person name="Lupski J.R."/>
            <person name="Nicholson C."/>
            <person name="Searle S.M."/>
            <person name="Wilming L."/>
            <person name="Young S.K."/>
            <person name="Abouelleil A."/>
            <person name="Allen N.R."/>
            <person name="Bi W."/>
            <person name="Bloom T."/>
            <person name="Borowsky M.L."/>
            <person name="Bugalter B.E."/>
            <person name="Butler J."/>
            <person name="Chang J.L."/>
            <person name="Chen C.-K."/>
            <person name="Cook A."/>
            <person name="Corum B."/>
            <person name="Cuomo C.A."/>
            <person name="de Jong P.J."/>
            <person name="DeCaprio D."/>
            <person name="Dewar K."/>
            <person name="FitzGerald M."/>
            <person name="Gilbert J."/>
            <person name="Gibson R."/>
            <person name="Gnerre S."/>
            <person name="Goldstein S."/>
            <person name="Grafham D.V."/>
            <person name="Grocock R."/>
            <person name="Hafez N."/>
            <person name="Hagopian D.S."/>
            <person name="Hart E."/>
            <person name="Norman C.H."/>
            <person name="Humphray S."/>
            <person name="Jaffe D.B."/>
            <person name="Jones M."/>
            <person name="Kamal M."/>
            <person name="Khodiyar V.K."/>
            <person name="LaButti K."/>
            <person name="Laird G."/>
            <person name="Lehoczky J."/>
            <person name="Liu X."/>
            <person name="Lokyitsang T."/>
            <person name="Loveland J."/>
            <person name="Lui A."/>
            <person name="Macdonald P."/>
            <person name="Major J.E."/>
            <person name="Matthews L."/>
            <person name="Mauceli E."/>
            <person name="McCarroll S.A."/>
            <person name="Mihalev A.H."/>
            <person name="Mudge J."/>
            <person name="Nguyen C."/>
            <person name="Nicol R."/>
            <person name="O'Leary S.B."/>
            <person name="Osoegawa K."/>
            <person name="Schwartz D.C."/>
            <person name="Shaw-Smith C."/>
            <person name="Stankiewicz P."/>
            <person name="Steward C."/>
            <person name="Swarbreck D."/>
            <person name="Venkataraman V."/>
            <person name="Whittaker C.A."/>
            <person name="Yang X."/>
            <person name="Zimmer A.R."/>
            <person name="Bradley A."/>
            <person name="Hubbard T."/>
            <person name="Birren B.W."/>
            <person name="Rogers J."/>
            <person name="Lander E.S."/>
            <person name="Nusbaum C."/>
        </authorList>
    </citation>
    <scope>NUCLEOTIDE SEQUENCE [LARGE SCALE GENOMIC DNA]</scope>
</reference>
<reference key="2">
    <citation type="submission" date="2005-09" db="EMBL/GenBank/DDBJ databases">
        <authorList>
            <person name="Mural R.J."/>
            <person name="Istrail S."/>
            <person name="Sutton G.G."/>
            <person name="Florea L."/>
            <person name="Halpern A.L."/>
            <person name="Mobarry C.M."/>
            <person name="Lippert R."/>
            <person name="Walenz B."/>
            <person name="Shatkay H."/>
            <person name="Dew I."/>
            <person name="Miller J.R."/>
            <person name="Flanigan M.J."/>
            <person name="Edwards N.J."/>
            <person name="Bolanos R."/>
            <person name="Fasulo D."/>
            <person name="Halldorsson B.V."/>
            <person name="Hannenhalli S."/>
            <person name="Turner R."/>
            <person name="Yooseph S."/>
            <person name="Lu F."/>
            <person name="Nusskern D.R."/>
            <person name="Shue B.C."/>
            <person name="Zheng X.H."/>
            <person name="Zhong F."/>
            <person name="Delcher A.L."/>
            <person name="Huson D.H."/>
            <person name="Kravitz S.A."/>
            <person name="Mouchard L."/>
            <person name="Reinert K."/>
            <person name="Remington K.A."/>
            <person name="Clark A.G."/>
            <person name="Waterman M.S."/>
            <person name="Eichler E.E."/>
            <person name="Adams M.D."/>
            <person name="Hunkapiller M.W."/>
            <person name="Myers E.W."/>
            <person name="Venter J.C."/>
        </authorList>
    </citation>
    <scope>NUCLEOTIDE SEQUENCE [LARGE SCALE GENOMIC DNA]</scope>
</reference>
<reference key="3">
    <citation type="journal article" date="2003" name="Prostate">
        <title>PRAC2: a new gene expressed in human prostate and prostate cancer.</title>
        <authorList>
            <person name="Olsson P."/>
            <person name="Motegi A."/>
            <person name="Bera T.K."/>
            <person name="Lee B."/>
            <person name="Pastan I."/>
        </authorList>
    </citation>
    <scope>IDENTIFICATION</scope>
    <scope>TISSUE SPECIFICITY</scope>
    <scope>SUBCELLULAR LOCATION</scope>
</reference>
<organism>
    <name type="scientific">Homo sapiens</name>
    <name type="common">Human</name>
    <dbReference type="NCBI Taxonomy" id="9606"/>
    <lineage>
        <taxon>Eukaryota</taxon>
        <taxon>Metazoa</taxon>
        <taxon>Chordata</taxon>
        <taxon>Craniata</taxon>
        <taxon>Vertebrata</taxon>
        <taxon>Euteleostomi</taxon>
        <taxon>Mammalia</taxon>
        <taxon>Eutheria</taxon>
        <taxon>Euarchontoglires</taxon>
        <taxon>Primates</taxon>
        <taxon>Haplorrhini</taxon>
        <taxon>Catarrhini</taxon>
        <taxon>Hominidae</taxon>
        <taxon>Homo</taxon>
    </lineage>
</organism>
<proteinExistence type="evidence at transcript level"/>
<sequence>MDRRRMALRPGSRRPTAFFFHSRWLVPNLLAFFLGLSGAGPIHLPMPWPNGRRHRVLDPHTQLSTHEAPGRWKPVAPRTMKACPQVLLEW</sequence>
<dbReference type="EMBL" id="AC091179">
    <property type="status" value="NOT_ANNOTATED_CDS"/>
    <property type="molecule type" value="Genomic_DNA"/>
</dbReference>
<dbReference type="EMBL" id="CH471109">
    <property type="protein sequence ID" value="EAW94715.1"/>
    <property type="molecule type" value="Genomic_DNA"/>
</dbReference>
<dbReference type="EMBL" id="CH471109">
    <property type="protein sequence ID" value="EAW94716.1"/>
    <property type="molecule type" value="Genomic_DNA"/>
</dbReference>
<dbReference type="CCDS" id="CCDS74100.1"/>
<dbReference type="RefSeq" id="NP_001269204.1">
    <property type="nucleotide sequence ID" value="NM_001282275.2"/>
</dbReference>
<dbReference type="RefSeq" id="XP_006721928.1">
    <property type="nucleotide sequence ID" value="XM_006721865.3"/>
</dbReference>
<dbReference type="RefSeq" id="XP_011523049.1">
    <property type="nucleotide sequence ID" value="XM_011524747.2"/>
</dbReference>
<dbReference type="RefSeq" id="XP_011523050.1">
    <property type="nucleotide sequence ID" value="XM_011524748.1"/>
</dbReference>
<dbReference type="RefSeq" id="XP_047291874.1">
    <property type="nucleotide sequence ID" value="XM_047435918.1"/>
</dbReference>
<dbReference type="RefSeq" id="XP_054171927.1">
    <property type="nucleotide sequence ID" value="XM_054315952.1"/>
</dbReference>
<dbReference type="RefSeq" id="XP_054171928.1">
    <property type="nucleotide sequence ID" value="XM_054315953.1"/>
</dbReference>
<dbReference type="RefSeq" id="XP_054171929.1">
    <property type="nucleotide sequence ID" value="XM_054315954.1"/>
</dbReference>
<dbReference type="STRING" id="9606.ENSP00000484945"/>
<dbReference type="BioMuta" id="PRAC2"/>
<dbReference type="PaxDb" id="9606-ENSP00000484945"/>
<dbReference type="DNASU" id="360205"/>
<dbReference type="Ensembl" id="ENST00000422730.4">
    <property type="protein sequence ID" value="ENSP00000481367.1"/>
    <property type="gene ID" value="ENSG00000229637.4"/>
</dbReference>
<dbReference type="GeneID" id="360205"/>
<dbReference type="KEGG" id="hsa:360205"/>
<dbReference type="MANE-Select" id="ENST00000422730.4">
    <property type="protein sequence ID" value="ENSP00000481367.1"/>
    <property type="RefSeq nucleotide sequence ID" value="NM_001282275.2"/>
    <property type="RefSeq protein sequence ID" value="NP_001269204.1"/>
</dbReference>
<dbReference type="UCSC" id="uc002inz.3">
    <property type="organism name" value="human"/>
</dbReference>
<dbReference type="AGR" id="HGNC:30143"/>
<dbReference type="CTD" id="360205"/>
<dbReference type="DisGeNET" id="360205"/>
<dbReference type="GeneCards" id="PRAC2"/>
<dbReference type="HGNC" id="HGNC:30143">
    <property type="gene designation" value="PRAC2"/>
</dbReference>
<dbReference type="HPA" id="ENSG00000229637">
    <property type="expression patterns" value="Group enriched (intestine, prostate)"/>
</dbReference>
<dbReference type="MIM" id="610787">
    <property type="type" value="gene"/>
</dbReference>
<dbReference type="neXtProt" id="NX_D3DTV9"/>
<dbReference type="OpenTargets" id="ENSG00000229637"/>
<dbReference type="VEuPathDB" id="HostDB:ENSG00000229637"/>
<dbReference type="eggNOG" id="ENOG502TDNB">
    <property type="taxonomic scope" value="Eukaryota"/>
</dbReference>
<dbReference type="GeneTree" id="ENSGT00860000135909"/>
<dbReference type="HOGENOM" id="CLU_2440232_0_0_1"/>
<dbReference type="InParanoid" id="D3DTV9"/>
<dbReference type="OrthoDB" id="9482550at2759"/>
<dbReference type="PAN-GO" id="D3DTV9">
    <property type="GO annotations" value="0 GO annotations based on evolutionary models"/>
</dbReference>
<dbReference type="PathwayCommons" id="D3DTV9"/>
<dbReference type="BioGRID-ORCS" id="360205">
    <property type="hits" value="7 hits in 157 CRISPR screens"/>
</dbReference>
<dbReference type="ChiTaRS" id="PRAC2">
    <property type="organism name" value="human"/>
</dbReference>
<dbReference type="GenomeRNAi" id="360205"/>
<dbReference type="Pharos" id="D3DTV9">
    <property type="development level" value="Tdark"/>
</dbReference>
<dbReference type="Proteomes" id="UP000005640">
    <property type="component" value="Chromosome 17"/>
</dbReference>
<dbReference type="RNAct" id="D3DTV9">
    <property type="molecule type" value="protein"/>
</dbReference>
<dbReference type="Bgee" id="ENSG00000229637">
    <property type="expression patterns" value="Expressed in primordial germ cell in gonad and 22 other cell types or tissues"/>
</dbReference>
<dbReference type="ExpressionAtlas" id="D3DTV9">
    <property type="expression patterns" value="baseline and differential"/>
</dbReference>
<dbReference type="GO" id="GO:0005634">
    <property type="term" value="C:nucleus"/>
    <property type="evidence" value="ECO:0007669"/>
    <property type="project" value="UniProtKB-SubCell"/>
</dbReference>